<sequence>MSVVGFDFGNENCLVAVARQRGIDVVLNDESNRETPAIVCFGDKQRFIGTAGAASTMMNPKNSISQIKRLIGRQFSDPELQRDIKSLPFSVTEGPDGYPLIHANYLGEIRAFTPTQVMGMMLSNLKGIAEKNLNTAVVDCCIGIPVYFTDLQRRAVLDAATIAGLHPLHLIHETTATALAYGIYKTDLPENDQLNVAFIDIGHASMQVCIAGFKKGQLKILSHAFDRSLGGRDFDEVLFNHFAAKFKDEYKIDVSQNAKASLRLRATCEKLKKVLSANPMAPLNIECLMAEKDVRGVIKREEFEEISIPILERVKRPLEKALSDAGLTVEDVHMVEVVGSGSRVPAMIKILTEFFGKEPRRTMNASECVSRGCALQCAILSPTFKVREFQVHESFPFSISLAWKGAATDAQNGGTENQQSTIVFPKGNPIPSVKALTFYRSGTFSIDVQYSDVNDLQAPPKISTYTIGPFQSSKGERAKLKVKVRLNLHGIVSVESATLLEEEEVEVSVTKDQSEETAKMDTDKASAEAAPASGDSDVNMQDAKDTSDATGTDNGVPESAEKPVQMETDSKAEAPKKKVKKTNVPLSELVYGALKTVEVEKAVEKEFEMALQDRVMEETKDRKNAVESYVYDMRNKLSDKYQEYITDSEREAFLANLQEVEDWLYEDGEDETKGVYVAKLEELKKVGDPVEVRYKESLERGSVIDQLGYCINSYREAAVSNDPKFDHIELAEKQKVLNECVEAEAWLREKQQQQDTLPKYATPALLSADVKSKAEALDKFCRPIMTKPKPAAKAEAPQAKGGEQADEGKSEPEQPASAEAMETENPAEGST</sequence>
<organism>
    <name type="scientific">Arabidopsis thaliana</name>
    <name type="common">Mouse-ear cress</name>
    <dbReference type="NCBI Taxonomy" id="3702"/>
    <lineage>
        <taxon>Eukaryota</taxon>
        <taxon>Viridiplantae</taxon>
        <taxon>Streptophyta</taxon>
        <taxon>Embryophyta</taxon>
        <taxon>Tracheophyta</taxon>
        <taxon>Spermatophyta</taxon>
        <taxon>Magnoliopsida</taxon>
        <taxon>eudicotyledons</taxon>
        <taxon>Gunneridae</taxon>
        <taxon>Pentapetalae</taxon>
        <taxon>rosids</taxon>
        <taxon>malvids</taxon>
        <taxon>Brassicales</taxon>
        <taxon>Brassicaceae</taxon>
        <taxon>Camelineae</taxon>
        <taxon>Arabidopsis</taxon>
    </lineage>
</organism>
<accession>F4HQD4</accession>
<accession>Q8VZ83</accession>
<accession>Q9CA95</accession>
<feature type="chain" id="PRO_0000415433" description="Heat shock 70 kDa protein 15">
    <location>
        <begin position="1"/>
        <end position="831"/>
    </location>
</feature>
<feature type="region of interest" description="Disordered" evidence="1">
    <location>
        <begin position="502"/>
        <end position="579"/>
    </location>
</feature>
<feature type="region of interest" description="Disordered" evidence="1">
    <location>
        <begin position="784"/>
        <end position="831"/>
    </location>
</feature>
<feature type="compositionally biased region" description="Basic and acidic residues" evidence="1">
    <location>
        <begin position="512"/>
        <end position="526"/>
    </location>
</feature>
<feature type="compositionally biased region" description="Low complexity" evidence="1">
    <location>
        <begin position="787"/>
        <end position="800"/>
    </location>
</feature>
<feature type="modified residue" description="Phosphoserine" evidence="4">
    <location>
        <position position="533"/>
    </location>
</feature>
<feature type="modified residue" description="Phosphoserine" evidence="4">
    <location>
        <position position="536"/>
    </location>
</feature>
<feature type="sequence conflict" description="In Ref. 3; AAL38353." evidence="3" ref="3">
    <original>A</original>
    <variation>T</variation>
    <location>
        <position position="792"/>
    </location>
</feature>
<protein>
    <recommendedName>
        <fullName>Heat shock 70 kDa protein 15</fullName>
    </recommendedName>
    <alternativeName>
        <fullName>Heat shock protein 70-15</fullName>
        <shortName>AtHsp70-15</shortName>
    </alternativeName>
</protein>
<dbReference type="EMBL" id="AC011717">
    <property type="protein sequence ID" value="AAG52244.1"/>
    <property type="status" value="ALT_SEQ"/>
    <property type="molecule type" value="Genomic_DNA"/>
</dbReference>
<dbReference type="EMBL" id="CP002684">
    <property type="status" value="NOT_ANNOTATED_CDS"/>
    <property type="molecule type" value="Genomic_DNA"/>
</dbReference>
<dbReference type="EMBL" id="AY065177">
    <property type="protein sequence ID" value="AAL38353.1"/>
    <property type="molecule type" value="mRNA"/>
</dbReference>
<dbReference type="EMBL" id="BT000810">
    <property type="status" value="NOT_ANNOTATED_CDS"/>
    <property type="molecule type" value="mRNA"/>
</dbReference>
<dbReference type="PIR" id="D96830">
    <property type="entry name" value="D96830"/>
</dbReference>
<dbReference type="RefSeq" id="NP_001319422.1">
    <property type="nucleotide sequence ID" value="NM_001334936.1"/>
</dbReference>
<dbReference type="RefSeq" id="NP_001322111.1">
    <property type="nucleotide sequence ID" value="NM_001334937.1"/>
</dbReference>
<dbReference type="RefSeq" id="NP_178110.7">
    <property type="nucleotide sequence ID" value="NM_106641.8"/>
</dbReference>
<dbReference type="SMR" id="F4HQD4"/>
<dbReference type="BioGRID" id="29550">
    <property type="interactions" value="11"/>
</dbReference>
<dbReference type="FunCoup" id="F4HQD4">
    <property type="interactions" value="3644"/>
</dbReference>
<dbReference type="STRING" id="3702.F4HQD4"/>
<dbReference type="GlyGen" id="F4HQD4">
    <property type="glycosylation" value="1 site"/>
</dbReference>
<dbReference type="iPTMnet" id="F4HQD4"/>
<dbReference type="PaxDb" id="3702-AT1G79920.1"/>
<dbReference type="GeneID" id="844332"/>
<dbReference type="KEGG" id="ath:AT1G79920"/>
<dbReference type="Araport" id="AT1G79920"/>
<dbReference type="TAIR" id="AT1G79920">
    <property type="gene designation" value="HSP70-15"/>
</dbReference>
<dbReference type="eggNOG" id="KOG0103">
    <property type="taxonomic scope" value="Eukaryota"/>
</dbReference>
<dbReference type="InParanoid" id="F4HQD4"/>
<dbReference type="PhylomeDB" id="F4HQD4"/>
<dbReference type="CD-CODE" id="4299E36E">
    <property type="entry name" value="Nucleolus"/>
</dbReference>
<dbReference type="PRO" id="PR:F4HQD4"/>
<dbReference type="Proteomes" id="UP000006548">
    <property type="component" value="Chromosome 1"/>
</dbReference>
<dbReference type="ExpressionAtlas" id="F4HQD4">
    <property type="expression patterns" value="baseline and differential"/>
</dbReference>
<dbReference type="GO" id="GO:0005829">
    <property type="term" value="C:cytosol"/>
    <property type="evidence" value="ECO:0000314"/>
    <property type="project" value="TAIR"/>
</dbReference>
<dbReference type="GO" id="GO:0005739">
    <property type="term" value="C:mitochondrion"/>
    <property type="evidence" value="ECO:0007005"/>
    <property type="project" value="TAIR"/>
</dbReference>
<dbReference type="GO" id="GO:0005634">
    <property type="term" value="C:nucleus"/>
    <property type="evidence" value="ECO:0000314"/>
    <property type="project" value="TAIR"/>
</dbReference>
<dbReference type="GO" id="GO:0009505">
    <property type="term" value="C:plant-type cell wall"/>
    <property type="evidence" value="ECO:0007005"/>
    <property type="project" value="TAIR"/>
</dbReference>
<dbReference type="GO" id="GO:0005886">
    <property type="term" value="C:plasma membrane"/>
    <property type="evidence" value="ECO:0007005"/>
    <property type="project" value="TAIR"/>
</dbReference>
<dbReference type="GO" id="GO:0009506">
    <property type="term" value="C:plasmodesma"/>
    <property type="evidence" value="ECO:0007005"/>
    <property type="project" value="TAIR"/>
</dbReference>
<dbReference type="GO" id="GO:0000774">
    <property type="term" value="F:adenyl-nucleotide exchange factor activity"/>
    <property type="evidence" value="ECO:0000318"/>
    <property type="project" value="GO_Central"/>
</dbReference>
<dbReference type="GO" id="GO:0005524">
    <property type="term" value="F:ATP binding"/>
    <property type="evidence" value="ECO:0007669"/>
    <property type="project" value="UniProtKB-KW"/>
</dbReference>
<dbReference type="GO" id="GO:0140662">
    <property type="term" value="F:ATP-dependent protein folding chaperone"/>
    <property type="evidence" value="ECO:0007669"/>
    <property type="project" value="InterPro"/>
</dbReference>
<dbReference type="GO" id="GO:0006457">
    <property type="term" value="P:protein folding"/>
    <property type="evidence" value="ECO:0000318"/>
    <property type="project" value="GO_Central"/>
</dbReference>
<dbReference type="CDD" id="cd24095">
    <property type="entry name" value="ASKHA_NBD_HSP70_AtHsp70-14-like"/>
    <property type="match status" value="1"/>
</dbReference>
<dbReference type="FunFam" id="2.60.34.10:FF:000031">
    <property type="entry name" value="Heat shock 70 kDa protein 14"/>
    <property type="match status" value="1"/>
</dbReference>
<dbReference type="FunFam" id="1.20.1270.10:FF:000002">
    <property type="entry name" value="Heat shock 70 kDa protein 4"/>
    <property type="match status" value="1"/>
</dbReference>
<dbReference type="FunFam" id="3.30.30.30:FF:000002">
    <property type="entry name" value="Heat shock 70 kDa protein 4"/>
    <property type="match status" value="1"/>
</dbReference>
<dbReference type="FunFam" id="3.30.420.40:FF:000171">
    <property type="entry name" value="Heat shock 70 kDa protein 4"/>
    <property type="match status" value="2"/>
</dbReference>
<dbReference type="FunFam" id="3.90.640.10:FF:000004">
    <property type="entry name" value="Heat shock 70 kDa protein 4"/>
    <property type="match status" value="1"/>
</dbReference>
<dbReference type="Gene3D" id="1.20.1270.10">
    <property type="match status" value="2"/>
</dbReference>
<dbReference type="Gene3D" id="3.30.30.30">
    <property type="match status" value="1"/>
</dbReference>
<dbReference type="Gene3D" id="3.30.420.40">
    <property type="match status" value="2"/>
</dbReference>
<dbReference type="Gene3D" id="3.90.640.10">
    <property type="entry name" value="Actin, Chain A, domain 4"/>
    <property type="match status" value="1"/>
</dbReference>
<dbReference type="Gene3D" id="2.60.34.10">
    <property type="entry name" value="Substrate Binding Domain Of DNAk, Chain A, domain 1"/>
    <property type="match status" value="1"/>
</dbReference>
<dbReference type="InterPro" id="IPR043129">
    <property type="entry name" value="ATPase_NBD"/>
</dbReference>
<dbReference type="InterPro" id="IPR029048">
    <property type="entry name" value="HSP70_C_sf"/>
</dbReference>
<dbReference type="InterPro" id="IPR029047">
    <property type="entry name" value="HSP70_peptide-bd_sf"/>
</dbReference>
<dbReference type="InterPro" id="IPR013126">
    <property type="entry name" value="Hsp_70_fam"/>
</dbReference>
<dbReference type="PANTHER" id="PTHR45639:SF4">
    <property type="entry name" value="HSC70CB, ISOFORM G"/>
    <property type="match status" value="1"/>
</dbReference>
<dbReference type="PANTHER" id="PTHR45639">
    <property type="entry name" value="HSC70CB, ISOFORM G-RELATED"/>
    <property type="match status" value="1"/>
</dbReference>
<dbReference type="Pfam" id="PF00012">
    <property type="entry name" value="HSP70"/>
    <property type="match status" value="2"/>
</dbReference>
<dbReference type="PRINTS" id="PR00301">
    <property type="entry name" value="HEATSHOCK70"/>
</dbReference>
<dbReference type="SUPFAM" id="SSF53067">
    <property type="entry name" value="Actin-like ATPase domain"/>
    <property type="match status" value="2"/>
</dbReference>
<dbReference type="SUPFAM" id="SSF100934">
    <property type="entry name" value="Heat shock protein 70kD (HSP70), C-terminal subdomain"/>
    <property type="match status" value="2"/>
</dbReference>
<dbReference type="SUPFAM" id="SSF100920">
    <property type="entry name" value="Heat shock protein 70kD (HSP70), peptide-binding domain"/>
    <property type="match status" value="1"/>
</dbReference>
<keyword id="KW-0025">Alternative splicing</keyword>
<keyword id="KW-0067">ATP-binding</keyword>
<keyword id="KW-0143">Chaperone</keyword>
<keyword id="KW-0963">Cytoplasm</keyword>
<keyword id="KW-0547">Nucleotide-binding</keyword>
<keyword id="KW-0539">Nucleus</keyword>
<keyword id="KW-0597">Phosphoprotein</keyword>
<keyword id="KW-1185">Reference proteome</keyword>
<keyword id="KW-0346">Stress response</keyword>
<reference key="1">
    <citation type="journal article" date="2000" name="Nature">
        <title>Sequence and analysis of chromosome 1 of the plant Arabidopsis thaliana.</title>
        <authorList>
            <person name="Theologis A."/>
            <person name="Ecker J.R."/>
            <person name="Palm C.J."/>
            <person name="Federspiel N.A."/>
            <person name="Kaul S."/>
            <person name="White O."/>
            <person name="Alonso J."/>
            <person name="Altafi H."/>
            <person name="Araujo R."/>
            <person name="Bowman C.L."/>
            <person name="Brooks S.Y."/>
            <person name="Buehler E."/>
            <person name="Chan A."/>
            <person name="Chao Q."/>
            <person name="Chen H."/>
            <person name="Cheuk R.F."/>
            <person name="Chin C.W."/>
            <person name="Chung M.K."/>
            <person name="Conn L."/>
            <person name="Conway A.B."/>
            <person name="Conway A.R."/>
            <person name="Creasy T.H."/>
            <person name="Dewar K."/>
            <person name="Dunn P."/>
            <person name="Etgu P."/>
            <person name="Feldblyum T.V."/>
            <person name="Feng J.-D."/>
            <person name="Fong B."/>
            <person name="Fujii C.Y."/>
            <person name="Gill J.E."/>
            <person name="Goldsmith A.D."/>
            <person name="Haas B."/>
            <person name="Hansen N.F."/>
            <person name="Hughes B."/>
            <person name="Huizar L."/>
            <person name="Hunter J.L."/>
            <person name="Jenkins J."/>
            <person name="Johnson-Hopson C."/>
            <person name="Khan S."/>
            <person name="Khaykin E."/>
            <person name="Kim C.J."/>
            <person name="Koo H.L."/>
            <person name="Kremenetskaia I."/>
            <person name="Kurtz D.B."/>
            <person name="Kwan A."/>
            <person name="Lam B."/>
            <person name="Langin-Hooper S."/>
            <person name="Lee A."/>
            <person name="Lee J.M."/>
            <person name="Lenz C.A."/>
            <person name="Li J.H."/>
            <person name="Li Y.-P."/>
            <person name="Lin X."/>
            <person name="Liu S.X."/>
            <person name="Liu Z.A."/>
            <person name="Luros J.S."/>
            <person name="Maiti R."/>
            <person name="Marziali A."/>
            <person name="Militscher J."/>
            <person name="Miranda M."/>
            <person name="Nguyen M."/>
            <person name="Nierman W.C."/>
            <person name="Osborne B.I."/>
            <person name="Pai G."/>
            <person name="Peterson J."/>
            <person name="Pham P.K."/>
            <person name="Rizzo M."/>
            <person name="Rooney T."/>
            <person name="Rowley D."/>
            <person name="Sakano H."/>
            <person name="Salzberg S.L."/>
            <person name="Schwartz J.R."/>
            <person name="Shinn P."/>
            <person name="Southwick A.M."/>
            <person name="Sun H."/>
            <person name="Tallon L.J."/>
            <person name="Tambunga G."/>
            <person name="Toriumi M.J."/>
            <person name="Town C.D."/>
            <person name="Utterback T."/>
            <person name="Van Aken S."/>
            <person name="Vaysberg M."/>
            <person name="Vysotskaia V.S."/>
            <person name="Walker M."/>
            <person name="Wu D."/>
            <person name="Yu G."/>
            <person name="Fraser C.M."/>
            <person name="Venter J.C."/>
            <person name="Davis R.W."/>
        </authorList>
    </citation>
    <scope>NUCLEOTIDE SEQUENCE [LARGE SCALE GENOMIC DNA]</scope>
    <source>
        <strain>cv. Columbia</strain>
    </source>
</reference>
<reference key="2">
    <citation type="journal article" date="2017" name="Plant J.">
        <title>Araport11: a complete reannotation of the Arabidopsis thaliana reference genome.</title>
        <authorList>
            <person name="Cheng C.Y."/>
            <person name="Krishnakumar V."/>
            <person name="Chan A.P."/>
            <person name="Thibaud-Nissen F."/>
            <person name="Schobel S."/>
            <person name="Town C.D."/>
        </authorList>
    </citation>
    <scope>GENOME REANNOTATION</scope>
    <source>
        <strain>cv. Columbia</strain>
    </source>
</reference>
<reference key="3">
    <citation type="journal article" date="2003" name="Science">
        <title>Empirical analysis of transcriptional activity in the Arabidopsis genome.</title>
        <authorList>
            <person name="Yamada K."/>
            <person name="Lim J."/>
            <person name="Dale J.M."/>
            <person name="Chen H."/>
            <person name="Shinn P."/>
            <person name="Palm C.J."/>
            <person name="Southwick A.M."/>
            <person name="Wu H.C."/>
            <person name="Kim C.J."/>
            <person name="Nguyen M."/>
            <person name="Pham P.K."/>
            <person name="Cheuk R.F."/>
            <person name="Karlin-Newmann G."/>
            <person name="Liu S.X."/>
            <person name="Lam B."/>
            <person name="Sakano H."/>
            <person name="Wu T."/>
            <person name="Yu G."/>
            <person name="Miranda M."/>
            <person name="Quach H.L."/>
            <person name="Tripp M."/>
            <person name="Chang C.H."/>
            <person name="Lee J.M."/>
            <person name="Toriumi M.J."/>
            <person name="Chan M.M."/>
            <person name="Tang C.C."/>
            <person name="Onodera C.S."/>
            <person name="Deng J.M."/>
            <person name="Akiyama K."/>
            <person name="Ansari Y."/>
            <person name="Arakawa T."/>
            <person name="Banh J."/>
            <person name="Banno F."/>
            <person name="Bowser L."/>
            <person name="Brooks S.Y."/>
            <person name="Carninci P."/>
            <person name="Chao Q."/>
            <person name="Choy N."/>
            <person name="Enju A."/>
            <person name="Goldsmith A.D."/>
            <person name="Gurjal M."/>
            <person name="Hansen N.F."/>
            <person name="Hayashizaki Y."/>
            <person name="Johnson-Hopson C."/>
            <person name="Hsuan V.W."/>
            <person name="Iida K."/>
            <person name="Karnes M."/>
            <person name="Khan S."/>
            <person name="Koesema E."/>
            <person name="Ishida J."/>
            <person name="Jiang P.X."/>
            <person name="Jones T."/>
            <person name="Kawai J."/>
            <person name="Kamiya A."/>
            <person name="Meyers C."/>
            <person name="Nakajima M."/>
            <person name="Narusaka M."/>
            <person name="Seki M."/>
            <person name="Sakurai T."/>
            <person name="Satou M."/>
            <person name="Tamse R."/>
            <person name="Vaysberg M."/>
            <person name="Wallender E.K."/>
            <person name="Wong C."/>
            <person name="Yamamura Y."/>
            <person name="Yuan S."/>
            <person name="Shinozaki K."/>
            <person name="Davis R.W."/>
            <person name="Theologis A."/>
            <person name="Ecker J.R."/>
        </authorList>
    </citation>
    <scope>NUCLEOTIDE SEQUENCE [LARGE SCALE MRNA]</scope>
    <source>
        <strain>cv. Columbia</strain>
    </source>
</reference>
<reference key="4">
    <citation type="journal article" date="2001" name="Cell Stress Chaperones">
        <title>Genomic analysis of the Hsp70 superfamily in Arabidopsis thaliana.</title>
        <authorList>
            <person name="Lin B.L."/>
            <person name="Wang J.S."/>
            <person name="Liu H.C."/>
            <person name="Chen R.W."/>
            <person name="Meyer Y."/>
            <person name="Barakat A."/>
            <person name="Delseny M."/>
        </authorList>
    </citation>
    <scope>GENE FAMILY</scope>
    <scope>NOMENCLATURE</scope>
</reference>
<reference key="5">
    <citation type="journal article" date="2007" name="Mol. Cell. Proteomics">
        <title>Multidimensional protein identification technology (MudPIT) analysis of ubiquitinated proteins in plants.</title>
        <authorList>
            <person name="Maor R."/>
            <person name="Jones A."/>
            <person name="Nuehse T.S."/>
            <person name="Studholme D.J."/>
            <person name="Peck S.C."/>
            <person name="Shirasu K."/>
        </authorList>
    </citation>
    <scope>IDENTIFICATION BY MASS SPECTROMETRY [LARGE SCALE ANALYSIS]</scope>
    <source>
        <strain>cv. Landsberg erecta</strain>
    </source>
</reference>
<reference key="6">
    <citation type="journal article" date="2009" name="J. Proteomics">
        <title>Phosphoproteomic analysis of nuclei-enriched fractions from Arabidopsis thaliana.</title>
        <authorList>
            <person name="Jones A.M.E."/>
            <person name="MacLean D."/>
            <person name="Studholme D.J."/>
            <person name="Serna-Sanz A."/>
            <person name="Andreasson E."/>
            <person name="Rathjen J.P."/>
            <person name="Peck S.C."/>
        </authorList>
    </citation>
    <scope>PHOSPHORYLATION [LARGE SCALE ANALYSIS] AT SER-533 AND SER-536</scope>
    <scope>IDENTIFICATION BY MASS SPECTROMETRY [LARGE SCALE ANALYSIS]</scope>
    <source>
        <strain>cv. Columbia</strain>
    </source>
</reference>
<reference key="7">
    <citation type="journal article" date="2011" name="Plant J.">
        <title>AtHsp70-15-deficient Arabidopsis plants are characterized by reduced growth, a constitutive cytosolic protein response and enhanced resistance to TuMV.</title>
        <authorList>
            <person name="Jungkunz I."/>
            <person name="Link K."/>
            <person name="Vogel F."/>
            <person name="Voll L.M."/>
            <person name="Sonnewald S."/>
            <person name="Sonnewald U."/>
        </authorList>
    </citation>
    <scope>DISRUPTION PHENOTYPE</scope>
    <scope>SUBCELLULAR LOCATION</scope>
</reference>
<gene>
    <name type="primary">HSP70-15</name>
    <name type="ordered locus">At1g79920</name>
    <name type="ORF">F19K16.12</name>
</gene>
<evidence type="ECO:0000256" key="1">
    <source>
        <dbReference type="SAM" id="MobiDB-lite"/>
    </source>
</evidence>
<evidence type="ECO:0000269" key="2">
    <source>
    </source>
</evidence>
<evidence type="ECO:0000305" key="3"/>
<evidence type="ECO:0007744" key="4">
    <source>
    </source>
</evidence>
<name>HSP7P_ARATH</name>
<comment type="function">
    <text evidence="3">In cooperation with other chaperones, Hsp70s are key components that facilitate folding of de novo synthesized proteins, assist translocation of precursor proteins into organelles, and are responsible for degradation of damaged protein under stress conditions.</text>
</comment>
<comment type="subcellular location">
    <subcellularLocation>
        <location evidence="2">Cytoplasm</location>
    </subcellularLocation>
    <subcellularLocation>
        <location evidence="2">Nucleus</location>
    </subcellularLocation>
    <text>Predominantly detected in the cytoplasm.</text>
</comment>
<comment type="alternative products">
    <event type="alternative splicing"/>
    <isoform>
        <id>F4HQD4-1</id>
        <name>1</name>
        <sequence type="displayed"/>
    </isoform>
    <text>A number of isoforms are produced. According to EST sequences.</text>
</comment>
<comment type="disruption phenotype">
    <text evidence="2">Knockout mutation impairs stomatal closure and accelerates wilting, enhances sensitivity to heat treatment, and strengthens tolerance to potyvirus TuMV infection.</text>
</comment>
<comment type="similarity">
    <text evidence="3">Belongs to the heat shock protein 70 (TC 1.A.33) family. HSP110/SSE subfamily.</text>
</comment>
<comment type="sequence caution" evidence="3">
    <conflict type="erroneous gene model prediction">
        <sequence resource="EMBL-CDS" id="AAG52244"/>
    </conflict>
</comment>
<proteinExistence type="evidence at protein level"/>